<protein>
    <recommendedName>
        <fullName evidence="1">Dihydroorotase</fullName>
        <shortName evidence="1">DHOase</shortName>
        <ecNumber evidence="1">3.5.2.3</ecNumber>
    </recommendedName>
</protein>
<comment type="function">
    <text evidence="1">Catalyzes the reversible cyclization of carbamoyl aspartate to dihydroorotate.</text>
</comment>
<comment type="catalytic activity">
    <reaction evidence="1">
        <text>(S)-dihydroorotate + H2O = N-carbamoyl-L-aspartate + H(+)</text>
        <dbReference type="Rhea" id="RHEA:24296"/>
        <dbReference type="ChEBI" id="CHEBI:15377"/>
        <dbReference type="ChEBI" id="CHEBI:15378"/>
        <dbReference type="ChEBI" id="CHEBI:30864"/>
        <dbReference type="ChEBI" id="CHEBI:32814"/>
        <dbReference type="EC" id="3.5.2.3"/>
    </reaction>
</comment>
<comment type="cofactor">
    <cofactor evidence="1">
        <name>Zn(2+)</name>
        <dbReference type="ChEBI" id="CHEBI:29105"/>
    </cofactor>
    <text evidence="1">Binds 2 Zn(2+) ions per subunit.</text>
</comment>
<comment type="pathway">
    <text evidence="1">Pyrimidine metabolism; UMP biosynthesis via de novo pathway; (S)-dihydroorotate from bicarbonate: step 3/3.</text>
</comment>
<comment type="subunit">
    <text evidence="1">Homodimer.</text>
</comment>
<comment type="similarity">
    <text evidence="1">Belongs to the metallo-dependent hydrolases superfamily. DHOase family. Class II DHOase subfamily.</text>
</comment>
<accession>A3QAV2</accession>
<reference key="1">
    <citation type="submission" date="2007-03" db="EMBL/GenBank/DDBJ databases">
        <title>Complete sequence of Shewanella loihica PV-4.</title>
        <authorList>
            <consortium name="US DOE Joint Genome Institute"/>
            <person name="Copeland A."/>
            <person name="Lucas S."/>
            <person name="Lapidus A."/>
            <person name="Barry K."/>
            <person name="Detter J.C."/>
            <person name="Glavina del Rio T."/>
            <person name="Hammon N."/>
            <person name="Israni S."/>
            <person name="Dalin E."/>
            <person name="Tice H."/>
            <person name="Pitluck S."/>
            <person name="Chain P."/>
            <person name="Malfatti S."/>
            <person name="Shin M."/>
            <person name="Vergez L."/>
            <person name="Schmutz J."/>
            <person name="Larimer F."/>
            <person name="Land M."/>
            <person name="Hauser L."/>
            <person name="Kyrpides N."/>
            <person name="Mikhailova N."/>
            <person name="Romine M.F."/>
            <person name="Serres G."/>
            <person name="Fredrickson J."/>
            <person name="Tiedje J."/>
            <person name="Richardson P."/>
        </authorList>
    </citation>
    <scope>NUCLEOTIDE SEQUENCE [LARGE SCALE GENOMIC DNA]</scope>
    <source>
        <strain>ATCC BAA-1088 / PV-4</strain>
    </source>
</reference>
<proteinExistence type="inferred from homology"/>
<dbReference type="EC" id="3.5.2.3" evidence="1"/>
<dbReference type="EMBL" id="CP000606">
    <property type="protein sequence ID" value="ABO22600.1"/>
    <property type="molecule type" value="Genomic_DNA"/>
</dbReference>
<dbReference type="RefSeq" id="WP_011864534.1">
    <property type="nucleotide sequence ID" value="NC_009092.1"/>
</dbReference>
<dbReference type="SMR" id="A3QAV2"/>
<dbReference type="STRING" id="323850.Shew_0728"/>
<dbReference type="MEROPS" id="M38.A02"/>
<dbReference type="KEGG" id="slo:Shew_0728"/>
<dbReference type="eggNOG" id="COG0418">
    <property type="taxonomic scope" value="Bacteria"/>
</dbReference>
<dbReference type="HOGENOM" id="CLU_041558_1_0_6"/>
<dbReference type="OrthoDB" id="9808095at2"/>
<dbReference type="UniPathway" id="UPA00070">
    <property type="reaction ID" value="UER00117"/>
</dbReference>
<dbReference type="Proteomes" id="UP000001558">
    <property type="component" value="Chromosome"/>
</dbReference>
<dbReference type="GO" id="GO:0005829">
    <property type="term" value="C:cytosol"/>
    <property type="evidence" value="ECO:0007669"/>
    <property type="project" value="TreeGrafter"/>
</dbReference>
<dbReference type="GO" id="GO:0004151">
    <property type="term" value="F:dihydroorotase activity"/>
    <property type="evidence" value="ECO:0007669"/>
    <property type="project" value="UniProtKB-UniRule"/>
</dbReference>
<dbReference type="GO" id="GO:0008270">
    <property type="term" value="F:zinc ion binding"/>
    <property type="evidence" value="ECO:0007669"/>
    <property type="project" value="UniProtKB-UniRule"/>
</dbReference>
<dbReference type="GO" id="GO:0006207">
    <property type="term" value="P:'de novo' pyrimidine nucleobase biosynthetic process"/>
    <property type="evidence" value="ECO:0007669"/>
    <property type="project" value="TreeGrafter"/>
</dbReference>
<dbReference type="GO" id="GO:0044205">
    <property type="term" value="P:'de novo' UMP biosynthetic process"/>
    <property type="evidence" value="ECO:0007669"/>
    <property type="project" value="UniProtKB-UniRule"/>
</dbReference>
<dbReference type="CDD" id="cd01294">
    <property type="entry name" value="DHOase"/>
    <property type="match status" value="1"/>
</dbReference>
<dbReference type="FunFam" id="3.20.20.140:FF:000006">
    <property type="entry name" value="Dihydroorotase"/>
    <property type="match status" value="1"/>
</dbReference>
<dbReference type="Gene3D" id="3.20.20.140">
    <property type="entry name" value="Metal-dependent hydrolases"/>
    <property type="match status" value="1"/>
</dbReference>
<dbReference type="HAMAP" id="MF_00219">
    <property type="entry name" value="PyrC_classII"/>
    <property type="match status" value="1"/>
</dbReference>
<dbReference type="InterPro" id="IPR006680">
    <property type="entry name" value="Amidohydro-rel"/>
</dbReference>
<dbReference type="InterPro" id="IPR004721">
    <property type="entry name" value="DHOdimr"/>
</dbReference>
<dbReference type="InterPro" id="IPR002195">
    <property type="entry name" value="Dihydroorotase_CS"/>
</dbReference>
<dbReference type="InterPro" id="IPR032466">
    <property type="entry name" value="Metal_Hydrolase"/>
</dbReference>
<dbReference type="NCBIfam" id="TIGR00856">
    <property type="entry name" value="pyrC_dimer"/>
    <property type="match status" value="1"/>
</dbReference>
<dbReference type="PANTHER" id="PTHR43137">
    <property type="entry name" value="DIHYDROOROTASE"/>
    <property type="match status" value="1"/>
</dbReference>
<dbReference type="PANTHER" id="PTHR43137:SF1">
    <property type="entry name" value="DIHYDROOROTASE"/>
    <property type="match status" value="1"/>
</dbReference>
<dbReference type="Pfam" id="PF01979">
    <property type="entry name" value="Amidohydro_1"/>
    <property type="match status" value="1"/>
</dbReference>
<dbReference type="PIRSF" id="PIRSF001237">
    <property type="entry name" value="DHOdimr"/>
    <property type="match status" value="1"/>
</dbReference>
<dbReference type="SUPFAM" id="SSF51556">
    <property type="entry name" value="Metallo-dependent hydrolases"/>
    <property type="match status" value="1"/>
</dbReference>
<dbReference type="PROSITE" id="PS00482">
    <property type="entry name" value="DIHYDROOROTASE_1"/>
    <property type="match status" value="1"/>
</dbReference>
<dbReference type="PROSITE" id="PS00483">
    <property type="entry name" value="DIHYDROOROTASE_2"/>
    <property type="match status" value="1"/>
</dbReference>
<feature type="chain" id="PRO_1000024055" description="Dihydroorotase">
    <location>
        <begin position="1"/>
        <end position="342"/>
    </location>
</feature>
<feature type="active site" evidence="1">
    <location>
        <position position="245"/>
    </location>
</feature>
<feature type="binding site" evidence="1">
    <location>
        <position position="13"/>
    </location>
    <ligand>
        <name>Zn(2+)</name>
        <dbReference type="ChEBI" id="CHEBI:29105"/>
        <label>1</label>
    </ligand>
</feature>
<feature type="binding site" evidence="1">
    <location>
        <begin position="15"/>
        <end position="17"/>
    </location>
    <ligand>
        <name>substrate</name>
    </ligand>
</feature>
<feature type="binding site" evidence="1">
    <location>
        <position position="15"/>
    </location>
    <ligand>
        <name>Zn(2+)</name>
        <dbReference type="ChEBI" id="CHEBI:29105"/>
        <label>1</label>
    </ligand>
</feature>
<feature type="binding site" evidence="1">
    <location>
        <position position="41"/>
    </location>
    <ligand>
        <name>substrate</name>
    </ligand>
</feature>
<feature type="binding site" description="via carbamate group" evidence="1">
    <location>
        <position position="97"/>
    </location>
    <ligand>
        <name>Zn(2+)</name>
        <dbReference type="ChEBI" id="CHEBI:29105"/>
        <label>1</label>
    </ligand>
</feature>
<feature type="binding site" description="via carbamate group" evidence="1">
    <location>
        <position position="97"/>
    </location>
    <ligand>
        <name>Zn(2+)</name>
        <dbReference type="ChEBI" id="CHEBI:29105"/>
        <label>2</label>
    </ligand>
</feature>
<feature type="binding site" evidence="1">
    <location>
        <position position="134"/>
    </location>
    <ligand>
        <name>substrate</name>
    </ligand>
</feature>
<feature type="binding site" evidence="1">
    <location>
        <position position="134"/>
    </location>
    <ligand>
        <name>Zn(2+)</name>
        <dbReference type="ChEBI" id="CHEBI:29105"/>
        <label>2</label>
    </ligand>
</feature>
<feature type="binding site" evidence="1">
    <location>
        <position position="172"/>
    </location>
    <ligand>
        <name>Zn(2+)</name>
        <dbReference type="ChEBI" id="CHEBI:29105"/>
        <label>2</label>
    </ligand>
</feature>
<feature type="binding site" evidence="1">
    <location>
        <position position="217"/>
    </location>
    <ligand>
        <name>substrate</name>
    </ligand>
</feature>
<feature type="binding site" evidence="1">
    <location>
        <position position="245"/>
    </location>
    <ligand>
        <name>Zn(2+)</name>
        <dbReference type="ChEBI" id="CHEBI:29105"/>
        <label>1</label>
    </ligand>
</feature>
<feature type="binding site" evidence="1">
    <location>
        <position position="249"/>
    </location>
    <ligand>
        <name>substrate</name>
    </ligand>
</feature>
<feature type="binding site" evidence="1">
    <location>
        <position position="261"/>
    </location>
    <ligand>
        <name>substrate</name>
    </ligand>
</feature>
<feature type="modified residue" description="N6-carboxylysine" evidence="1">
    <location>
        <position position="97"/>
    </location>
</feature>
<name>PYRC_SHELP</name>
<sequence>MTKLTITRPDDWHVHLRDGDVLTDTVRDTGRYMGRAIIMPNLVPPATNVDSALAYYERIKAVCTTNFEPLMVLYLTDNTTAEDIRAAKASGKVVAAKLYPAGATTNSDSGVTDVKNIYPVLEAMQEVGMLFLVHGEVTDSSIDIFDREATFINNTLKQVVADFPSLKIVLEHITTKDAVDFVMGASDNVAATITAHHLLYNRNHMLAGGIRPHFYCLPILKRNTHQQALLAAAASGSKKFFLGTDSAPHAKDRKEAACGCAGSYTAHAAIELYAEAFESVGALDKLEAFASFNGPDFYGLPRNTDSITLVKRSWEVPATYPLGDTGVVPIRAGETIDWQVED</sequence>
<organism>
    <name type="scientific">Shewanella loihica (strain ATCC BAA-1088 / PV-4)</name>
    <dbReference type="NCBI Taxonomy" id="323850"/>
    <lineage>
        <taxon>Bacteria</taxon>
        <taxon>Pseudomonadati</taxon>
        <taxon>Pseudomonadota</taxon>
        <taxon>Gammaproteobacteria</taxon>
        <taxon>Alteromonadales</taxon>
        <taxon>Shewanellaceae</taxon>
        <taxon>Shewanella</taxon>
    </lineage>
</organism>
<keyword id="KW-0378">Hydrolase</keyword>
<keyword id="KW-0479">Metal-binding</keyword>
<keyword id="KW-0665">Pyrimidine biosynthesis</keyword>
<keyword id="KW-1185">Reference proteome</keyword>
<keyword id="KW-0862">Zinc</keyword>
<evidence type="ECO:0000255" key="1">
    <source>
        <dbReference type="HAMAP-Rule" id="MF_00219"/>
    </source>
</evidence>
<gene>
    <name evidence="1" type="primary">pyrC</name>
    <name type="ordered locus">Shew_0728</name>
</gene>